<keyword id="KW-0694">RNA-binding</keyword>
<keyword id="KW-0346">Stress response</keyword>
<reference key="1">
    <citation type="submission" date="2007-05" db="EMBL/GenBank/DDBJ databases">
        <title>Complete sequence of Pseudomonas putida F1.</title>
        <authorList>
            <consortium name="US DOE Joint Genome Institute"/>
            <person name="Copeland A."/>
            <person name="Lucas S."/>
            <person name="Lapidus A."/>
            <person name="Barry K."/>
            <person name="Detter J.C."/>
            <person name="Glavina del Rio T."/>
            <person name="Hammon N."/>
            <person name="Israni S."/>
            <person name="Dalin E."/>
            <person name="Tice H."/>
            <person name="Pitluck S."/>
            <person name="Chain P."/>
            <person name="Malfatti S."/>
            <person name="Shin M."/>
            <person name="Vergez L."/>
            <person name="Schmutz J."/>
            <person name="Larimer F."/>
            <person name="Land M."/>
            <person name="Hauser L."/>
            <person name="Kyrpides N."/>
            <person name="Lykidis A."/>
            <person name="Parales R."/>
            <person name="Richardson P."/>
        </authorList>
    </citation>
    <scope>NUCLEOTIDE SEQUENCE [LARGE SCALE GENOMIC DNA]</scope>
    <source>
        <strain>ATCC 700007 / DSM 6899 / JCM 31910 / BCRC 17059 / LMG 24140 / F1</strain>
    </source>
</reference>
<organism>
    <name type="scientific">Pseudomonas putida (strain ATCC 700007 / DSM 6899 / JCM 31910 / BCRC 17059 / LMG 24140 / F1)</name>
    <dbReference type="NCBI Taxonomy" id="351746"/>
    <lineage>
        <taxon>Bacteria</taxon>
        <taxon>Pseudomonadati</taxon>
        <taxon>Pseudomonadota</taxon>
        <taxon>Gammaproteobacteria</taxon>
        <taxon>Pseudomonadales</taxon>
        <taxon>Pseudomonadaceae</taxon>
        <taxon>Pseudomonas</taxon>
    </lineage>
</organism>
<sequence>MSKGHSLQDPYLNTLRKEKVPVSIYLVNGIKLQGSIESFDQFVVLLKNTVSQMVYKHAISTVVPARPVRLPSPTDSEHGDSEPGNA</sequence>
<evidence type="ECO:0000255" key="1">
    <source>
        <dbReference type="HAMAP-Rule" id="MF_00436"/>
    </source>
</evidence>
<evidence type="ECO:0000255" key="2">
    <source>
        <dbReference type="PROSITE-ProRule" id="PRU01346"/>
    </source>
</evidence>
<evidence type="ECO:0000256" key="3">
    <source>
        <dbReference type="SAM" id="MobiDB-lite"/>
    </source>
</evidence>
<comment type="function">
    <text evidence="1">RNA chaperone that binds small regulatory RNA (sRNAs) and mRNAs to facilitate mRNA translational regulation in response to envelope stress, environmental stress and changes in metabolite concentrations. Also binds with high specificity to tRNAs.</text>
</comment>
<comment type="subunit">
    <text evidence="1">Homohexamer.</text>
</comment>
<comment type="similarity">
    <text evidence="1">Belongs to the Hfq family.</text>
</comment>
<dbReference type="EMBL" id="CP000712">
    <property type="protein sequence ID" value="ABQ80890.1"/>
    <property type="molecule type" value="Genomic_DNA"/>
</dbReference>
<dbReference type="SMR" id="A5W9T0"/>
<dbReference type="KEGG" id="ppf:Pput_4770"/>
<dbReference type="eggNOG" id="COG1923">
    <property type="taxonomic scope" value="Bacteria"/>
</dbReference>
<dbReference type="HOGENOM" id="CLU_113688_2_2_6"/>
<dbReference type="GO" id="GO:0005829">
    <property type="term" value="C:cytosol"/>
    <property type="evidence" value="ECO:0007669"/>
    <property type="project" value="TreeGrafter"/>
</dbReference>
<dbReference type="GO" id="GO:0003723">
    <property type="term" value="F:RNA binding"/>
    <property type="evidence" value="ECO:0007669"/>
    <property type="project" value="UniProtKB-UniRule"/>
</dbReference>
<dbReference type="GO" id="GO:0006355">
    <property type="term" value="P:regulation of DNA-templated transcription"/>
    <property type="evidence" value="ECO:0007669"/>
    <property type="project" value="InterPro"/>
</dbReference>
<dbReference type="GO" id="GO:0043487">
    <property type="term" value="P:regulation of RNA stability"/>
    <property type="evidence" value="ECO:0007669"/>
    <property type="project" value="TreeGrafter"/>
</dbReference>
<dbReference type="GO" id="GO:0045974">
    <property type="term" value="P:regulation of translation, ncRNA-mediated"/>
    <property type="evidence" value="ECO:0007669"/>
    <property type="project" value="TreeGrafter"/>
</dbReference>
<dbReference type="CDD" id="cd01716">
    <property type="entry name" value="Hfq"/>
    <property type="match status" value="1"/>
</dbReference>
<dbReference type="FunFam" id="2.30.30.100:FF:000001">
    <property type="entry name" value="RNA-binding protein Hfq"/>
    <property type="match status" value="1"/>
</dbReference>
<dbReference type="Gene3D" id="2.30.30.100">
    <property type="match status" value="1"/>
</dbReference>
<dbReference type="HAMAP" id="MF_00436">
    <property type="entry name" value="Hfq"/>
    <property type="match status" value="1"/>
</dbReference>
<dbReference type="InterPro" id="IPR005001">
    <property type="entry name" value="Hfq"/>
</dbReference>
<dbReference type="InterPro" id="IPR010920">
    <property type="entry name" value="LSM_dom_sf"/>
</dbReference>
<dbReference type="InterPro" id="IPR047575">
    <property type="entry name" value="Sm"/>
</dbReference>
<dbReference type="NCBIfam" id="TIGR02383">
    <property type="entry name" value="Hfq"/>
    <property type="match status" value="1"/>
</dbReference>
<dbReference type="NCBIfam" id="NF001602">
    <property type="entry name" value="PRK00395.1"/>
    <property type="match status" value="1"/>
</dbReference>
<dbReference type="PANTHER" id="PTHR34772">
    <property type="entry name" value="RNA-BINDING PROTEIN HFQ"/>
    <property type="match status" value="1"/>
</dbReference>
<dbReference type="PANTHER" id="PTHR34772:SF1">
    <property type="entry name" value="RNA-BINDING PROTEIN HFQ"/>
    <property type="match status" value="1"/>
</dbReference>
<dbReference type="Pfam" id="PF17209">
    <property type="entry name" value="Hfq"/>
    <property type="match status" value="1"/>
</dbReference>
<dbReference type="SUPFAM" id="SSF50182">
    <property type="entry name" value="Sm-like ribonucleoproteins"/>
    <property type="match status" value="1"/>
</dbReference>
<dbReference type="PROSITE" id="PS52002">
    <property type="entry name" value="SM"/>
    <property type="match status" value="1"/>
</dbReference>
<accession>A5W9T0</accession>
<proteinExistence type="inferred from homology"/>
<name>HFQ_PSEP1</name>
<gene>
    <name evidence="1" type="primary">hfq</name>
    <name type="ordered locus">Pput_4770</name>
</gene>
<protein>
    <recommendedName>
        <fullName evidence="1">RNA-binding protein Hfq</fullName>
    </recommendedName>
</protein>
<feature type="chain" id="PRO_1000025928" description="RNA-binding protein Hfq">
    <location>
        <begin position="1"/>
        <end position="86"/>
    </location>
</feature>
<feature type="domain" description="Sm" evidence="2">
    <location>
        <begin position="9"/>
        <end position="68"/>
    </location>
</feature>
<feature type="region of interest" description="Disordered" evidence="3">
    <location>
        <begin position="66"/>
        <end position="86"/>
    </location>
</feature>
<feature type="compositionally biased region" description="Basic and acidic residues" evidence="3">
    <location>
        <begin position="75"/>
        <end position="86"/>
    </location>
</feature>